<name>UBIE_FRATT</name>
<organism>
    <name type="scientific">Francisella tularensis subsp. tularensis (strain SCHU S4 / Schu 4)</name>
    <dbReference type="NCBI Taxonomy" id="177416"/>
    <lineage>
        <taxon>Bacteria</taxon>
        <taxon>Pseudomonadati</taxon>
        <taxon>Pseudomonadota</taxon>
        <taxon>Gammaproteobacteria</taxon>
        <taxon>Thiotrichales</taxon>
        <taxon>Francisellaceae</taxon>
        <taxon>Francisella</taxon>
    </lineage>
</organism>
<dbReference type="EC" id="2.1.1.163" evidence="1"/>
<dbReference type="EC" id="2.1.1.201" evidence="1"/>
<dbReference type="EMBL" id="AJ749949">
    <property type="protein sequence ID" value="CAG45929.1"/>
    <property type="molecule type" value="Genomic_DNA"/>
</dbReference>
<dbReference type="RefSeq" id="WP_003022004.1">
    <property type="nucleotide sequence ID" value="NC_006570.2"/>
</dbReference>
<dbReference type="RefSeq" id="YP_170251.1">
    <property type="nucleotide sequence ID" value="NC_006570.2"/>
</dbReference>
<dbReference type="SMR" id="Q5NFE1"/>
<dbReference type="STRING" id="177416.FTT_1296"/>
<dbReference type="DNASU" id="3192321"/>
<dbReference type="EnsemblBacteria" id="CAG45929">
    <property type="protein sequence ID" value="CAG45929"/>
    <property type="gene ID" value="FTT_1296"/>
</dbReference>
<dbReference type="KEGG" id="ftu:FTT_1296"/>
<dbReference type="eggNOG" id="COG2226">
    <property type="taxonomic scope" value="Bacteria"/>
</dbReference>
<dbReference type="OrthoDB" id="9808140at2"/>
<dbReference type="UniPathway" id="UPA00079">
    <property type="reaction ID" value="UER00169"/>
</dbReference>
<dbReference type="UniPathway" id="UPA00232"/>
<dbReference type="Proteomes" id="UP000001174">
    <property type="component" value="Chromosome"/>
</dbReference>
<dbReference type="GO" id="GO:0008425">
    <property type="term" value="F:2-methoxy-6-polyprenyl-1,4-benzoquinol methyltransferase activity"/>
    <property type="evidence" value="ECO:0007669"/>
    <property type="project" value="UniProtKB-UniRule"/>
</dbReference>
<dbReference type="GO" id="GO:0043770">
    <property type="term" value="F:demethylmenaquinone methyltransferase activity"/>
    <property type="evidence" value="ECO:0007669"/>
    <property type="project" value="UniProtKB-UniRule"/>
</dbReference>
<dbReference type="GO" id="GO:0009060">
    <property type="term" value="P:aerobic respiration"/>
    <property type="evidence" value="ECO:0007669"/>
    <property type="project" value="UniProtKB-UniRule"/>
</dbReference>
<dbReference type="GO" id="GO:0009234">
    <property type="term" value="P:menaquinone biosynthetic process"/>
    <property type="evidence" value="ECO:0007669"/>
    <property type="project" value="UniProtKB-UniRule"/>
</dbReference>
<dbReference type="GO" id="GO:0032259">
    <property type="term" value="P:methylation"/>
    <property type="evidence" value="ECO:0007669"/>
    <property type="project" value="UniProtKB-KW"/>
</dbReference>
<dbReference type="CDD" id="cd02440">
    <property type="entry name" value="AdoMet_MTases"/>
    <property type="match status" value="1"/>
</dbReference>
<dbReference type="FunFam" id="3.40.50.150:FF:000014">
    <property type="entry name" value="Ubiquinone/menaquinone biosynthesis C-methyltransferase UbiE"/>
    <property type="match status" value="1"/>
</dbReference>
<dbReference type="Gene3D" id="3.40.50.150">
    <property type="entry name" value="Vaccinia Virus protein VP39"/>
    <property type="match status" value="1"/>
</dbReference>
<dbReference type="HAMAP" id="MF_01813">
    <property type="entry name" value="MenG_UbiE_methyltr"/>
    <property type="match status" value="1"/>
</dbReference>
<dbReference type="InterPro" id="IPR029063">
    <property type="entry name" value="SAM-dependent_MTases_sf"/>
</dbReference>
<dbReference type="InterPro" id="IPR004033">
    <property type="entry name" value="UbiE/COQ5_MeTrFase"/>
</dbReference>
<dbReference type="InterPro" id="IPR023576">
    <property type="entry name" value="UbiE/COQ5_MeTrFase_CS"/>
</dbReference>
<dbReference type="NCBIfam" id="TIGR01934">
    <property type="entry name" value="MenG_MenH_UbiE"/>
    <property type="match status" value="1"/>
</dbReference>
<dbReference type="NCBIfam" id="NF001240">
    <property type="entry name" value="PRK00216.1-1"/>
    <property type="match status" value="1"/>
</dbReference>
<dbReference type="NCBIfam" id="NF001242">
    <property type="entry name" value="PRK00216.1-3"/>
    <property type="match status" value="1"/>
</dbReference>
<dbReference type="NCBIfam" id="NF001244">
    <property type="entry name" value="PRK00216.1-5"/>
    <property type="match status" value="1"/>
</dbReference>
<dbReference type="PANTHER" id="PTHR43591:SF24">
    <property type="entry name" value="2-METHOXY-6-POLYPRENYL-1,4-BENZOQUINOL METHYLASE, MITOCHONDRIAL"/>
    <property type="match status" value="1"/>
</dbReference>
<dbReference type="PANTHER" id="PTHR43591">
    <property type="entry name" value="METHYLTRANSFERASE"/>
    <property type="match status" value="1"/>
</dbReference>
<dbReference type="Pfam" id="PF01209">
    <property type="entry name" value="Ubie_methyltran"/>
    <property type="match status" value="1"/>
</dbReference>
<dbReference type="SUPFAM" id="SSF53335">
    <property type="entry name" value="S-adenosyl-L-methionine-dependent methyltransferases"/>
    <property type="match status" value="1"/>
</dbReference>
<dbReference type="PROSITE" id="PS51608">
    <property type="entry name" value="SAM_MT_UBIE"/>
    <property type="match status" value="1"/>
</dbReference>
<dbReference type="PROSITE" id="PS01183">
    <property type="entry name" value="UBIE_1"/>
    <property type="match status" value="1"/>
</dbReference>
<accession>Q5NFE1</accession>
<sequence length="250" mass="28031">MSKENKTTDFGFTQVPWEEKQKKVAGVFHSVAAKYDLMNDLMSFGIHRIWKKQTIAKSGVRKGDNVLDLAGGTGDLAYKFCQMVGQQGKVILSDINSSMLEVGKEKLTNKGCVGNIEYVQANAECLPFPDNYFDCITISFGLRNVTDKDKALASMCRVLKPGGRSLVLEFSKPIIPLLSKVYDEYSFKALPFLGKIITQDAESYKYLAESIRKHPDQQTLKQMMYDAGFDNVEYQNMTGGIVALHIGYKY</sequence>
<proteinExistence type="inferred from homology"/>
<feature type="chain" id="PRO_0000193278" description="Ubiquinone/menaquinone biosynthesis C-methyltransferase UbiE">
    <location>
        <begin position="1"/>
        <end position="250"/>
    </location>
</feature>
<feature type="binding site" evidence="1">
    <location>
        <position position="73"/>
    </location>
    <ligand>
        <name>S-adenosyl-L-methionine</name>
        <dbReference type="ChEBI" id="CHEBI:59789"/>
    </ligand>
</feature>
<feature type="binding site" evidence="1">
    <location>
        <position position="94"/>
    </location>
    <ligand>
        <name>S-adenosyl-L-methionine</name>
        <dbReference type="ChEBI" id="CHEBI:59789"/>
    </ligand>
</feature>
<feature type="binding site" evidence="1">
    <location>
        <begin position="122"/>
        <end position="123"/>
    </location>
    <ligand>
        <name>S-adenosyl-L-methionine</name>
        <dbReference type="ChEBI" id="CHEBI:59789"/>
    </ligand>
</feature>
<feature type="binding site" evidence="1">
    <location>
        <position position="139"/>
    </location>
    <ligand>
        <name>S-adenosyl-L-methionine</name>
        <dbReference type="ChEBI" id="CHEBI:59789"/>
    </ligand>
</feature>
<evidence type="ECO:0000255" key="1">
    <source>
        <dbReference type="HAMAP-Rule" id="MF_01813"/>
    </source>
</evidence>
<keyword id="KW-0474">Menaquinone biosynthesis</keyword>
<keyword id="KW-0489">Methyltransferase</keyword>
<keyword id="KW-1185">Reference proteome</keyword>
<keyword id="KW-0949">S-adenosyl-L-methionine</keyword>
<keyword id="KW-0808">Transferase</keyword>
<keyword id="KW-0831">Ubiquinone biosynthesis</keyword>
<comment type="function">
    <text evidence="1">Methyltransferase required for the conversion of demethylmenaquinol (DMKH2) to menaquinol (MKH2) and the conversion of 2-polyprenyl-6-methoxy-1,4-benzoquinol (DDMQH2) to 2-polyprenyl-3-methyl-6-methoxy-1,4-benzoquinol (DMQH2).</text>
</comment>
<comment type="catalytic activity">
    <reaction evidence="1">
        <text>a 2-demethylmenaquinol + S-adenosyl-L-methionine = a menaquinol + S-adenosyl-L-homocysteine + H(+)</text>
        <dbReference type="Rhea" id="RHEA:42640"/>
        <dbReference type="Rhea" id="RHEA-COMP:9539"/>
        <dbReference type="Rhea" id="RHEA-COMP:9563"/>
        <dbReference type="ChEBI" id="CHEBI:15378"/>
        <dbReference type="ChEBI" id="CHEBI:18151"/>
        <dbReference type="ChEBI" id="CHEBI:55437"/>
        <dbReference type="ChEBI" id="CHEBI:57856"/>
        <dbReference type="ChEBI" id="CHEBI:59789"/>
        <dbReference type="EC" id="2.1.1.163"/>
    </reaction>
</comment>
<comment type="catalytic activity">
    <reaction evidence="1">
        <text>a 2-methoxy-6-(all-trans-polyprenyl)benzene-1,4-diol + S-adenosyl-L-methionine = a 5-methoxy-2-methyl-3-(all-trans-polyprenyl)benzene-1,4-diol + S-adenosyl-L-homocysteine + H(+)</text>
        <dbReference type="Rhea" id="RHEA:28286"/>
        <dbReference type="Rhea" id="RHEA-COMP:10858"/>
        <dbReference type="Rhea" id="RHEA-COMP:10859"/>
        <dbReference type="ChEBI" id="CHEBI:15378"/>
        <dbReference type="ChEBI" id="CHEBI:57856"/>
        <dbReference type="ChEBI" id="CHEBI:59789"/>
        <dbReference type="ChEBI" id="CHEBI:84166"/>
        <dbReference type="ChEBI" id="CHEBI:84167"/>
        <dbReference type="EC" id="2.1.1.201"/>
    </reaction>
</comment>
<comment type="pathway">
    <text evidence="1">Quinol/quinone metabolism; menaquinone biosynthesis; menaquinol from 1,4-dihydroxy-2-naphthoate: step 2/2.</text>
</comment>
<comment type="pathway">
    <text evidence="1">Cofactor biosynthesis; ubiquinone biosynthesis.</text>
</comment>
<comment type="similarity">
    <text evidence="1">Belongs to the class I-like SAM-binding methyltransferase superfamily. MenG/UbiE family.</text>
</comment>
<protein>
    <recommendedName>
        <fullName evidence="1">Ubiquinone/menaquinone biosynthesis C-methyltransferase UbiE</fullName>
        <ecNumber evidence="1">2.1.1.163</ecNumber>
        <ecNumber evidence="1">2.1.1.201</ecNumber>
    </recommendedName>
    <alternativeName>
        <fullName evidence="1">2-methoxy-6-polyprenyl-1,4-benzoquinol methylase</fullName>
    </alternativeName>
    <alternativeName>
        <fullName evidence="1">Demethylmenaquinone methyltransferase</fullName>
    </alternativeName>
</protein>
<gene>
    <name evidence="1" type="primary">ubiE</name>
    <name type="ordered locus">FTT_1296</name>
</gene>
<reference key="1">
    <citation type="journal article" date="2005" name="Nat. Genet.">
        <title>The complete genome sequence of Francisella tularensis, the causative agent of tularemia.</title>
        <authorList>
            <person name="Larsson P."/>
            <person name="Oyston P.C.F."/>
            <person name="Chain P."/>
            <person name="Chu M.C."/>
            <person name="Duffield M."/>
            <person name="Fuxelius H.-H."/>
            <person name="Garcia E."/>
            <person name="Haelltorp G."/>
            <person name="Johansson D."/>
            <person name="Isherwood K.E."/>
            <person name="Karp P.D."/>
            <person name="Larsson E."/>
            <person name="Liu Y."/>
            <person name="Michell S."/>
            <person name="Prior J."/>
            <person name="Prior R."/>
            <person name="Malfatti S."/>
            <person name="Sjoestedt A."/>
            <person name="Svensson K."/>
            <person name="Thompson N."/>
            <person name="Vergez L."/>
            <person name="Wagg J.K."/>
            <person name="Wren B.W."/>
            <person name="Lindler L.E."/>
            <person name="Andersson S.G.E."/>
            <person name="Forsman M."/>
            <person name="Titball R.W."/>
        </authorList>
    </citation>
    <scope>NUCLEOTIDE SEQUENCE [LARGE SCALE GENOMIC DNA]</scope>
    <source>
        <strain>SCHU S4 / Schu 4</strain>
    </source>
</reference>